<keyword id="KW-0131">Cell cycle</keyword>
<keyword id="KW-0132">Cell division</keyword>
<keyword id="KW-0143">Chaperone</keyword>
<keyword id="KW-0963">Cytoplasm</keyword>
<keyword id="KW-0413">Isomerase</keyword>
<keyword id="KW-0697">Rotamase</keyword>
<feature type="chain" id="PRO_1000115540" description="Trigger factor">
    <location>
        <begin position="1"/>
        <end position="451"/>
    </location>
</feature>
<feature type="domain" description="PPIase FKBP-type" evidence="1">
    <location>
        <begin position="165"/>
        <end position="250"/>
    </location>
</feature>
<accession>B6JM26</accession>
<gene>
    <name evidence="1" type="primary">tig</name>
    <name type="ordered locus">HPP12_0802</name>
</gene>
<dbReference type="EC" id="5.2.1.8" evidence="1"/>
<dbReference type="EMBL" id="CP001217">
    <property type="protein sequence ID" value="ACJ07954.1"/>
    <property type="molecule type" value="Genomic_DNA"/>
</dbReference>
<dbReference type="SMR" id="B6JM26"/>
<dbReference type="KEGG" id="hpp:HPP12_0802"/>
<dbReference type="HOGENOM" id="CLU_033058_2_2_7"/>
<dbReference type="Proteomes" id="UP000008198">
    <property type="component" value="Chromosome"/>
</dbReference>
<dbReference type="GO" id="GO:0005737">
    <property type="term" value="C:cytoplasm"/>
    <property type="evidence" value="ECO:0007669"/>
    <property type="project" value="UniProtKB-SubCell"/>
</dbReference>
<dbReference type="GO" id="GO:0003755">
    <property type="term" value="F:peptidyl-prolyl cis-trans isomerase activity"/>
    <property type="evidence" value="ECO:0007669"/>
    <property type="project" value="UniProtKB-UniRule"/>
</dbReference>
<dbReference type="GO" id="GO:0044183">
    <property type="term" value="F:protein folding chaperone"/>
    <property type="evidence" value="ECO:0007669"/>
    <property type="project" value="TreeGrafter"/>
</dbReference>
<dbReference type="GO" id="GO:0043022">
    <property type="term" value="F:ribosome binding"/>
    <property type="evidence" value="ECO:0007669"/>
    <property type="project" value="TreeGrafter"/>
</dbReference>
<dbReference type="GO" id="GO:0051083">
    <property type="term" value="P:'de novo' cotranslational protein folding"/>
    <property type="evidence" value="ECO:0007669"/>
    <property type="project" value="TreeGrafter"/>
</dbReference>
<dbReference type="GO" id="GO:0051301">
    <property type="term" value="P:cell division"/>
    <property type="evidence" value="ECO:0007669"/>
    <property type="project" value="UniProtKB-KW"/>
</dbReference>
<dbReference type="GO" id="GO:0061077">
    <property type="term" value="P:chaperone-mediated protein folding"/>
    <property type="evidence" value="ECO:0007669"/>
    <property type="project" value="TreeGrafter"/>
</dbReference>
<dbReference type="GO" id="GO:0015031">
    <property type="term" value="P:protein transport"/>
    <property type="evidence" value="ECO:0007669"/>
    <property type="project" value="UniProtKB-UniRule"/>
</dbReference>
<dbReference type="GO" id="GO:0043335">
    <property type="term" value="P:protein unfolding"/>
    <property type="evidence" value="ECO:0007669"/>
    <property type="project" value="TreeGrafter"/>
</dbReference>
<dbReference type="FunFam" id="3.10.50.40:FF:000001">
    <property type="entry name" value="Trigger factor"/>
    <property type="match status" value="1"/>
</dbReference>
<dbReference type="FunFam" id="3.30.70.1050:FF:000010">
    <property type="entry name" value="Trigger factor"/>
    <property type="match status" value="1"/>
</dbReference>
<dbReference type="Gene3D" id="3.10.50.40">
    <property type="match status" value="1"/>
</dbReference>
<dbReference type="Gene3D" id="3.30.70.1050">
    <property type="entry name" value="Trigger factor ribosome-binding domain"/>
    <property type="match status" value="1"/>
</dbReference>
<dbReference type="Gene3D" id="1.10.3120.10">
    <property type="entry name" value="Trigger factor, C-terminal domain"/>
    <property type="match status" value="1"/>
</dbReference>
<dbReference type="HAMAP" id="MF_00303">
    <property type="entry name" value="Trigger_factor_Tig"/>
    <property type="match status" value="1"/>
</dbReference>
<dbReference type="InterPro" id="IPR046357">
    <property type="entry name" value="PPIase_dom_sf"/>
</dbReference>
<dbReference type="InterPro" id="IPR001179">
    <property type="entry name" value="PPIase_FKBP_dom"/>
</dbReference>
<dbReference type="InterPro" id="IPR005215">
    <property type="entry name" value="Trig_fac"/>
</dbReference>
<dbReference type="InterPro" id="IPR008880">
    <property type="entry name" value="Trigger_fac_C"/>
</dbReference>
<dbReference type="InterPro" id="IPR037041">
    <property type="entry name" value="Trigger_fac_C_sf"/>
</dbReference>
<dbReference type="InterPro" id="IPR008881">
    <property type="entry name" value="Trigger_fac_ribosome-bd_bac"/>
</dbReference>
<dbReference type="InterPro" id="IPR036611">
    <property type="entry name" value="Trigger_fac_ribosome-bd_sf"/>
</dbReference>
<dbReference type="InterPro" id="IPR027304">
    <property type="entry name" value="Trigger_fact/SurA_dom_sf"/>
</dbReference>
<dbReference type="NCBIfam" id="TIGR00115">
    <property type="entry name" value="tig"/>
    <property type="match status" value="1"/>
</dbReference>
<dbReference type="PANTHER" id="PTHR30560">
    <property type="entry name" value="TRIGGER FACTOR CHAPERONE AND PEPTIDYL-PROLYL CIS/TRANS ISOMERASE"/>
    <property type="match status" value="1"/>
</dbReference>
<dbReference type="PANTHER" id="PTHR30560:SF3">
    <property type="entry name" value="TRIGGER FACTOR-LIKE PROTEIN TIG, CHLOROPLASTIC"/>
    <property type="match status" value="1"/>
</dbReference>
<dbReference type="Pfam" id="PF00254">
    <property type="entry name" value="FKBP_C"/>
    <property type="match status" value="1"/>
</dbReference>
<dbReference type="Pfam" id="PF05698">
    <property type="entry name" value="Trigger_C"/>
    <property type="match status" value="1"/>
</dbReference>
<dbReference type="Pfam" id="PF05697">
    <property type="entry name" value="Trigger_N"/>
    <property type="match status" value="1"/>
</dbReference>
<dbReference type="PIRSF" id="PIRSF003095">
    <property type="entry name" value="Trigger_factor"/>
    <property type="match status" value="1"/>
</dbReference>
<dbReference type="SUPFAM" id="SSF54534">
    <property type="entry name" value="FKBP-like"/>
    <property type="match status" value="1"/>
</dbReference>
<dbReference type="SUPFAM" id="SSF109998">
    <property type="entry name" value="Triger factor/SurA peptide-binding domain-like"/>
    <property type="match status" value="1"/>
</dbReference>
<dbReference type="SUPFAM" id="SSF102735">
    <property type="entry name" value="Trigger factor ribosome-binding domain"/>
    <property type="match status" value="1"/>
</dbReference>
<dbReference type="PROSITE" id="PS50059">
    <property type="entry name" value="FKBP_PPIASE"/>
    <property type="match status" value="1"/>
</dbReference>
<reference key="1">
    <citation type="submission" date="2008-10" db="EMBL/GenBank/DDBJ databases">
        <title>The complete genome sequence of Helicobacter pylori strain P12.</title>
        <authorList>
            <person name="Fischer W."/>
            <person name="Windhager L."/>
            <person name="Karnholz A."/>
            <person name="Zeiller M."/>
            <person name="Zimmer R."/>
            <person name="Haas R."/>
        </authorList>
    </citation>
    <scope>NUCLEOTIDE SEQUENCE [LARGE SCALE GENOMIC DNA]</scope>
    <source>
        <strain>P12</strain>
    </source>
</reference>
<comment type="function">
    <text evidence="1">Involved in protein export. Acts as a chaperone by maintaining the newly synthesized protein in an open conformation. Functions as a peptidyl-prolyl cis-trans isomerase.</text>
</comment>
<comment type="catalytic activity">
    <reaction evidence="1">
        <text>[protein]-peptidylproline (omega=180) = [protein]-peptidylproline (omega=0)</text>
        <dbReference type="Rhea" id="RHEA:16237"/>
        <dbReference type="Rhea" id="RHEA-COMP:10747"/>
        <dbReference type="Rhea" id="RHEA-COMP:10748"/>
        <dbReference type="ChEBI" id="CHEBI:83833"/>
        <dbReference type="ChEBI" id="CHEBI:83834"/>
        <dbReference type="EC" id="5.2.1.8"/>
    </reaction>
</comment>
<comment type="subcellular location">
    <subcellularLocation>
        <location>Cytoplasm</location>
    </subcellularLocation>
    <text evidence="1">About half TF is bound to the ribosome near the polypeptide exit tunnel while the other half is free in the cytoplasm.</text>
</comment>
<comment type="domain">
    <text evidence="1">Consists of 3 domains; the N-terminus binds the ribosome, the middle domain has PPIase activity, while the C-terminus has intrinsic chaperone activity on its own.</text>
</comment>
<comment type="similarity">
    <text evidence="1">Belongs to the FKBP-type PPIase family. Tig subfamily.</text>
</comment>
<proteinExistence type="inferred from homology"/>
<name>TIG_HELP2</name>
<sequence length="451" mass="51820">MNLEVKKIDTANARLSAKPSIENLEKRYDKIAQKIAQKVKIDGFRRGKVPLSLVKTRYQAQIEQDAQEEMIQEVLKNAFKELGIENKDLIGSPNLTKFEKKDTHFEIEADIGLKPTIVLDKIKECVPSVGVEIPNEEKINERLKQLAKDYAKFVDTDAQRKAQNDDKLTIDFEGFIDNAPFEGGKAENFNLILGSKQMLEDFEKALLGMQAGEEKEFPLIFPSGYHAEHLAGKEALFKVKLHQIQVREALEINDELAKIVLANEENATLKLLKERVEGQLFLENKARLYNEELKEKLIENLDEKIVFDLPKTIIEQEMDLLFRNALYSMQAEEVKSLQESQEKAKEKRESFRNDATKSVKITFIIDALAKEEKIGVHDNEVFQTLYYEAMMTGQNPENLIEQYRKNNMLAAVKMAMIEDRVLAYLLDKNLPKEQQEILEKMRPNAQKTQAG</sequence>
<evidence type="ECO:0000255" key="1">
    <source>
        <dbReference type="HAMAP-Rule" id="MF_00303"/>
    </source>
</evidence>
<organism>
    <name type="scientific">Helicobacter pylori (strain P12)</name>
    <dbReference type="NCBI Taxonomy" id="570508"/>
    <lineage>
        <taxon>Bacteria</taxon>
        <taxon>Pseudomonadati</taxon>
        <taxon>Campylobacterota</taxon>
        <taxon>Epsilonproteobacteria</taxon>
        <taxon>Campylobacterales</taxon>
        <taxon>Helicobacteraceae</taxon>
        <taxon>Helicobacter</taxon>
    </lineage>
</organism>
<protein>
    <recommendedName>
        <fullName evidence="1">Trigger factor</fullName>
        <shortName evidence="1">TF</shortName>
        <ecNumber evidence="1">5.2.1.8</ecNumber>
    </recommendedName>
    <alternativeName>
        <fullName evidence="1">PPIase</fullName>
    </alternativeName>
</protein>